<sequence>MSSYRGGSRGGGSNYMSNLPFGLGYGDVGKNHITEFPSIPLPINGPITNKERSLAVKYINFGKTVKDGPFYTGSMSLIIDQQENSKSGKRKPNIILDEDDTNDGIERYSDKYLKKRKIGISIDDHPYNLNLFPNELYNVMGINKKKLLAISKFNNADDVFTGTGLQDENIGLSMLAKLKELAEDVDDASTGDGAAKGSKTGEGEDDDLADDDFEEDEDEEDDDDYNAEKYFNNGDDDDYGDEEDPNEEAAF</sequence>
<feature type="chain" id="PRO_0000073980" description="DNA-directed RNA polymerase III subunit RPC7">
    <location>
        <begin position="1"/>
        <end position="251"/>
    </location>
</feature>
<feature type="region of interest" description="Disordered" evidence="1">
    <location>
        <begin position="186"/>
        <end position="251"/>
    </location>
</feature>
<feature type="compositionally biased region" description="Acidic residues" evidence="1">
    <location>
        <begin position="203"/>
        <end position="225"/>
    </location>
</feature>
<feature type="compositionally biased region" description="Acidic residues" evidence="1">
    <location>
        <begin position="234"/>
        <end position="251"/>
    </location>
</feature>
<feature type="modified residue" description="Phosphoserine" evidence="3">
    <location>
        <position position="189"/>
    </location>
</feature>
<feature type="sequence conflict" description="In Ref. 2; AAA34390." evidence="2" ref="2">
    <original>G</original>
    <variation>R</variation>
    <location>
        <position position="12"/>
    </location>
</feature>
<feature type="sequence conflict" description="In Ref. 2; AAA34390." evidence="2" ref="2">
    <original>D</original>
    <variation>H</variation>
    <location>
        <position position="205"/>
    </location>
</feature>
<feature type="strand" evidence="6">
    <location>
        <begin position="25"/>
        <end position="29"/>
    </location>
</feature>
<feature type="helix" evidence="7">
    <location>
        <begin position="42"/>
        <end position="44"/>
    </location>
</feature>
<feature type="strand" evidence="4">
    <location>
        <begin position="46"/>
        <end position="48"/>
    </location>
</feature>
<feature type="helix" evidence="6">
    <location>
        <begin position="49"/>
        <end position="66"/>
    </location>
</feature>
<feature type="strand" evidence="6">
    <location>
        <begin position="67"/>
        <end position="69"/>
    </location>
</feature>
<feature type="strand" evidence="4">
    <location>
        <begin position="74"/>
        <end position="78"/>
    </location>
</feature>
<feature type="strand" evidence="5">
    <location>
        <begin position="80"/>
        <end position="83"/>
    </location>
</feature>
<feature type="helix" evidence="5">
    <location>
        <begin position="85"/>
        <end position="87"/>
    </location>
</feature>
<feature type="helix" evidence="5">
    <location>
        <begin position="91"/>
        <end position="93"/>
    </location>
</feature>
<feature type="helix" evidence="5">
    <location>
        <begin position="98"/>
        <end position="104"/>
    </location>
</feature>
<feature type="turn" evidence="6">
    <location>
        <begin position="108"/>
        <end position="112"/>
    </location>
</feature>
<feature type="turn" evidence="6">
    <location>
        <begin position="122"/>
        <end position="124"/>
    </location>
</feature>
<feature type="helix" evidence="6">
    <location>
        <begin position="129"/>
        <end position="131"/>
    </location>
</feature>
<feature type="helix" evidence="6">
    <location>
        <begin position="137"/>
        <end position="139"/>
    </location>
</feature>
<proteinExistence type="evidence at protein level"/>
<organism>
    <name type="scientific">Saccharomyces cerevisiae (strain ATCC 204508 / S288c)</name>
    <name type="common">Baker's yeast</name>
    <dbReference type="NCBI Taxonomy" id="559292"/>
    <lineage>
        <taxon>Eukaryota</taxon>
        <taxon>Fungi</taxon>
        <taxon>Dikarya</taxon>
        <taxon>Ascomycota</taxon>
        <taxon>Saccharomycotina</taxon>
        <taxon>Saccharomycetes</taxon>
        <taxon>Saccharomycetales</taxon>
        <taxon>Saccharomycetaceae</taxon>
        <taxon>Saccharomyces</taxon>
    </lineage>
</organism>
<accession>P17890</accession>
<accession>D6W132</accession>
<accession>P20838</accession>
<comment type="function">
    <text>DNA-dependent RNA polymerase catalyzes the transcription of DNA into RNA using the four ribonucleoside triphosphates as substrates. Specific peripheric component of RNA polymerase III which synthesizes small RNAs, such as 5S rRNA and tRNAs. C31 is involved in the formation of the initiation complex.</text>
</comment>
<comment type="subunit">
    <text>Component of the RNA polymerase III (Pol III) complex consisting of 17 subunits.</text>
</comment>
<comment type="interaction">
    <interactant intactId="EBI-15841">
        <id>P17890</id>
    </interactant>
    <interactant intactId="EBI-15835">
        <id>P32910</id>
        <label>RPC34</label>
    </interactant>
    <organismsDiffer>false</organismsDiffer>
    <experiments>2</experiments>
</comment>
<comment type="subcellular location">
    <subcellularLocation>
        <location>Nucleus</location>
    </subcellularLocation>
</comment>
<comment type="miscellaneous">
    <text>The acidic domain is essential for its function.</text>
</comment>
<comment type="similarity">
    <text evidence="2">Belongs to the eukaryotic RPC7 RNA polymerase subunit family.</text>
</comment>
<dbReference type="EMBL" id="X51498">
    <property type="protein sequence ID" value="CAA35866.1"/>
    <property type="molecule type" value="Genomic_DNA"/>
</dbReference>
<dbReference type="EMBL" id="M20315">
    <property type="protein sequence ID" value="AAA34390.1"/>
    <property type="molecule type" value="Genomic_DNA"/>
</dbReference>
<dbReference type="EMBL" id="X92517">
    <property type="protein sequence ID" value="CAA63288.1"/>
    <property type="molecule type" value="Genomic_DNA"/>
</dbReference>
<dbReference type="EMBL" id="Z71427">
    <property type="protein sequence ID" value="CAA96038.1"/>
    <property type="molecule type" value="Genomic_DNA"/>
</dbReference>
<dbReference type="EMBL" id="BK006947">
    <property type="protein sequence ID" value="DAA10398.1"/>
    <property type="molecule type" value="Genomic_DNA"/>
</dbReference>
<dbReference type="PIR" id="A36465">
    <property type="entry name" value="RNBY3C"/>
</dbReference>
<dbReference type="RefSeq" id="NP_014248.3">
    <property type="nucleotide sequence ID" value="NM_001182989.3"/>
</dbReference>
<dbReference type="PDB" id="5FJ8">
    <property type="method" value="EM"/>
    <property type="resolution" value="3.90 A"/>
    <property type="chains" value="Q=1-69"/>
</dbReference>
<dbReference type="PDB" id="5FJ9">
    <property type="method" value="EM"/>
    <property type="resolution" value="4.60 A"/>
    <property type="chains" value="Q=1-69"/>
</dbReference>
<dbReference type="PDB" id="5FJA">
    <property type="method" value="EM"/>
    <property type="resolution" value="4.65 A"/>
    <property type="chains" value="Q=1-69"/>
</dbReference>
<dbReference type="PDB" id="6CNB">
    <property type="method" value="EM"/>
    <property type="resolution" value="4.10 A"/>
    <property type="chains" value="Q=1-251"/>
</dbReference>
<dbReference type="PDB" id="6CNC">
    <property type="method" value="EM"/>
    <property type="resolution" value="4.10 A"/>
    <property type="chains" value="Q=1-251"/>
</dbReference>
<dbReference type="PDB" id="6CND">
    <property type="method" value="EM"/>
    <property type="resolution" value="4.80 A"/>
    <property type="chains" value="Q=1-251"/>
</dbReference>
<dbReference type="PDB" id="6CNF">
    <property type="method" value="EM"/>
    <property type="resolution" value="4.50 A"/>
    <property type="chains" value="Q=1-251"/>
</dbReference>
<dbReference type="PDB" id="6EU0">
    <property type="method" value="EM"/>
    <property type="resolution" value="4.00 A"/>
    <property type="chains" value="Q=1-251"/>
</dbReference>
<dbReference type="PDB" id="6EU1">
    <property type="method" value="EM"/>
    <property type="resolution" value="3.40 A"/>
    <property type="chains" value="Q=1-251"/>
</dbReference>
<dbReference type="PDB" id="6EU2">
    <property type="method" value="EM"/>
    <property type="resolution" value="3.40 A"/>
    <property type="chains" value="Q=1-251"/>
</dbReference>
<dbReference type="PDB" id="6EU3">
    <property type="method" value="EM"/>
    <property type="resolution" value="3.30 A"/>
    <property type="chains" value="Q=1-251"/>
</dbReference>
<dbReference type="PDB" id="6F40">
    <property type="method" value="EM"/>
    <property type="resolution" value="3.70 A"/>
    <property type="chains" value="Q=1-251"/>
</dbReference>
<dbReference type="PDB" id="6F41">
    <property type="method" value="EM"/>
    <property type="resolution" value="4.30 A"/>
    <property type="chains" value="Q=1-251"/>
</dbReference>
<dbReference type="PDB" id="6F42">
    <property type="method" value="EM"/>
    <property type="resolution" value="5.50 A"/>
    <property type="chains" value="Q=1-251"/>
</dbReference>
<dbReference type="PDB" id="6F44">
    <property type="method" value="EM"/>
    <property type="resolution" value="4.20 A"/>
    <property type="chains" value="Q=1-251"/>
</dbReference>
<dbReference type="PDB" id="6TUT">
    <property type="method" value="EM"/>
    <property type="resolution" value="3.25 A"/>
    <property type="chains" value="Q=1-251"/>
</dbReference>
<dbReference type="PDB" id="7Z0H">
    <property type="method" value="EM"/>
    <property type="resolution" value="2.60 A"/>
    <property type="chains" value="Q=1-251"/>
</dbReference>
<dbReference type="PDB" id="7Z1L">
    <property type="method" value="EM"/>
    <property type="resolution" value="2.80 A"/>
    <property type="chains" value="Q=1-251"/>
</dbReference>
<dbReference type="PDB" id="7Z1M">
    <property type="method" value="EM"/>
    <property type="resolution" value="3.40 A"/>
    <property type="chains" value="Q=1-251"/>
</dbReference>
<dbReference type="PDB" id="7Z1N">
    <property type="method" value="EM"/>
    <property type="resolution" value="3.90 A"/>
    <property type="chains" value="Q=1-251"/>
</dbReference>
<dbReference type="PDB" id="7Z1O">
    <property type="method" value="EM"/>
    <property type="resolution" value="2.70 A"/>
    <property type="chains" value="Q=1-251"/>
</dbReference>
<dbReference type="PDB" id="7Z2Z">
    <property type="method" value="EM"/>
    <property type="resolution" value="3.07 A"/>
    <property type="chains" value="Q=1-251"/>
</dbReference>
<dbReference type="PDB" id="7Z30">
    <property type="method" value="EM"/>
    <property type="resolution" value="2.90 A"/>
    <property type="chains" value="Q=1-251"/>
</dbReference>
<dbReference type="PDB" id="7Z31">
    <property type="method" value="EM"/>
    <property type="resolution" value="2.76 A"/>
    <property type="chains" value="Q=1-251"/>
</dbReference>
<dbReference type="PDB" id="8BWS">
    <property type="method" value="EM"/>
    <property type="resolution" value="3.20 A"/>
    <property type="chains" value="Q=1-251"/>
</dbReference>
<dbReference type="PDBsum" id="5FJ8"/>
<dbReference type="PDBsum" id="5FJ9"/>
<dbReference type="PDBsum" id="5FJA"/>
<dbReference type="PDBsum" id="6CNB"/>
<dbReference type="PDBsum" id="6CNC"/>
<dbReference type="PDBsum" id="6CND"/>
<dbReference type="PDBsum" id="6CNF"/>
<dbReference type="PDBsum" id="6EU0"/>
<dbReference type="PDBsum" id="6EU1"/>
<dbReference type="PDBsum" id="6EU2"/>
<dbReference type="PDBsum" id="6EU3"/>
<dbReference type="PDBsum" id="6F40"/>
<dbReference type="PDBsum" id="6F41"/>
<dbReference type="PDBsum" id="6F42"/>
<dbReference type="PDBsum" id="6F44"/>
<dbReference type="PDBsum" id="6TUT"/>
<dbReference type="PDBsum" id="7Z0H"/>
<dbReference type="PDBsum" id="7Z1L"/>
<dbReference type="PDBsum" id="7Z1M"/>
<dbReference type="PDBsum" id="7Z1N"/>
<dbReference type="PDBsum" id="7Z1O"/>
<dbReference type="PDBsum" id="7Z2Z"/>
<dbReference type="PDBsum" id="7Z30"/>
<dbReference type="PDBsum" id="7Z31"/>
<dbReference type="PDBsum" id="8BWS"/>
<dbReference type="EMDB" id="EMD-10595"/>
<dbReference type="EMDB" id="EMD-14421"/>
<dbReference type="EMDB" id="EMD-14447"/>
<dbReference type="EMDB" id="EMD-14448"/>
<dbReference type="EMDB" id="EMD-14449"/>
<dbReference type="EMDB" id="EMD-14451"/>
<dbReference type="EMDB" id="EMD-14468"/>
<dbReference type="EMDB" id="EMD-14469"/>
<dbReference type="EMDB" id="EMD-14470"/>
<dbReference type="EMDB" id="EMD-16299"/>
<dbReference type="EMDB" id="EMD-3955"/>
<dbReference type="EMDB" id="EMD-3956"/>
<dbReference type="EMDB" id="EMD-3957"/>
<dbReference type="EMDB" id="EMD-3958"/>
<dbReference type="EMDB" id="EMD-4180"/>
<dbReference type="EMDB" id="EMD-4181"/>
<dbReference type="EMDB" id="EMD-4182"/>
<dbReference type="EMDB" id="EMD-4183"/>
<dbReference type="EMDB" id="EMD-7530"/>
<dbReference type="EMDB" id="EMD-7531"/>
<dbReference type="EMDB" id="EMD-7532"/>
<dbReference type="EMDB" id="EMD-7533"/>
<dbReference type="SMR" id="P17890"/>
<dbReference type="BioGRID" id="35678">
    <property type="interactions" value="190"/>
</dbReference>
<dbReference type="ComplexPortal" id="CPX-2660">
    <property type="entry name" value="DNA-directed RNA polymerase III complex"/>
</dbReference>
<dbReference type="DIP" id="DIP-6687N"/>
<dbReference type="FunCoup" id="P17890">
    <property type="interactions" value="103"/>
</dbReference>
<dbReference type="IntAct" id="P17890">
    <property type="interactions" value="21"/>
</dbReference>
<dbReference type="MINT" id="P17890"/>
<dbReference type="STRING" id="4932.YNL151C"/>
<dbReference type="iPTMnet" id="P17890"/>
<dbReference type="PaxDb" id="4932-YNL151C"/>
<dbReference type="PeptideAtlas" id="P17890"/>
<dbReference type="EnsemblFungi" id="YNL151C_mRNA">
    <property type="protein sequence ID" value="YNL151C"/>
    <property type="gene ID" value="YNL151C"/>
</dbReference>
<dbReference type="GeneID" id="855571"/>
<dbReference type="KEGG" id="sce:YNL151C"/>
<dbReference type="AGR" id="SGD:S000005095"/>
<dbReference type="SGD" id="S000005095">
    <property type="gene designation" value="RPC31"/>
</dbReference>
<dbReference type="VEuPathDB" id="FungiDB:YNL151C"/>
<dbReference type="eggNOG" id="ENOG502RZ0V">
    <property type="taxonomic scope" value="Eukaryota"/>
</dbReference>
<dbReference type="HOGENOM" id="CLU_072641_2_0_1"/>
<dbReference type="InParanoid" id="P17890"/>
<dbReference type="OMA" id="ADPYENT"/>
<dbReference type="OrthoDB" id="5377312at2759"/>
<dbReference type="BioCyc" id="YEAST:G3O-33168-MONOMER"/>
<dbReference type="Reactome" id="R-SCE-76066">
    <property type="pathway name" value="RNA Polymerase III Transcription Initiation From Type 2 Promoter"/>
</dbReference>
<dbReference type="BioGRID-ORCS" id="855571">
    <property type="hits" value="0 hits in 10 CRISPR screens"/>
</dbReference>
<dbReference type="EvolutionaryTrace" id="P17890"/>
<dbReference type="PRO" id="PR:P17890"/>
<dbReference type="Proteomes" id="UP000002311">
    <property type="component" value="Chromosome XIV"/>
</dbReference>
<dbReference type="RNAct" id="P17890">
    <property type="molecule type" value="protein"/>
</dbReference>
<dbReference type="GO" id="GO:0005654">
    <property type="term" value="C:nucleoplasm"/>
    <property type="evidence" value="ECO:0000304"/>
    <property type="project" value="Reactome"/>
</dbReference>
<dbReference type="GO" id="GO:0005634">
    <property type="term" value="C:nucleus"/>
    <property type="evidence" value="ECO:0000303"/>
    <property type="project" value="ComplexPortal"/>
</dbReference>
<dbReference type="GO" id="GO:0005666">
    <property type="term" value="C:RNA polymerase III complex"/>
    <property type="evidence" value="ECO:0000314"/>
    <property type="project" value="SGD"/>
</dbReference>
<dbReference type="GO" id="GO:0003677">
    <property type="term" value="F:DNA binding"/>
    <property type="evidence" value="ECO:0007669"/>
    <property type="project" value="UniProtKB-KW"/>
</dbReference>
<dbReference type="GO" id="GO:0016779">
    <property type="term" value="F:nucleotidyltransferase activity"/>
    <property type="evidence" value="ECO:0007669"/>
    <property type="project" value="UniProtKB-KW"/>
</dbReference>
<dbReference type="GO" id="GO:0006386">
    <property type="term" value="P:termination of RNA polymerase III transcription"/>
    <property type="evidence" value="ECO:0000314"/>
    <property type="project" value="ComplexPortal"/>
</dbReference>
<dbReference type="GO" id="GO:0006383">
    <property type="term" value="P:transcription by RNA polymerase III"/>
    <property type="evidence" value="ECO:0000314"/>
    <property type="project" value="ComplexPortal"/>
</dbReference>
<dbReference type="GO" id="GO:0006384">
    <property type="term" value="P:transcription initiation at RNA polymerase III promoter"/>
    <property type="evidence" value="ECO:0000314"/>
    <property type="project" value="ComplexPortal"/>
</dbReference>
<dbReference type="GO" id="GO:0042797">
    <property type="term" value="P:tRNA transcription by RNA polymerase III"/>
    <property type="evidence" value="ECO:0000314"/>
    <property type="project" value="SGD"/>
</dbReference>
<dbReference type="InterPro" id="IPR024661">
    <property type="entry name" value="RNA_pol_III_Rpc31"/>
</dbReference>
<dbReference type="PANTHER" id="PTHR15367">
    <property type="entry name" value="DNA-DIRECTED RNA POLYMERASE III"/>
    <property type="match status" value="1"/>
</dbReference>
<dbReference type="PANTHER" id="PTHR15367:SF2">
    <property type="entry name" value="DNA-DIRECTED RNA POLYMERASE III SUBUNIT"/>
    <property type="match status" value="1"/>
</dbReference>
<dbReference type="Pfam" id="PF11705">
    <property type="entry name" value="RNA_pol_3_Rpc31"/>
    <property type="match status" value="1"/>
</dbReference>
<dbReference type="PIRSF" id="PIRSF000777">
    <property type="entry name" value="RNA_polIII_C31"/>
    <property type="match status" value="1"/>
</dbReference>
<reference key="1">
    <citation type="journal article" date="1990" name="Mol. Cell. Biol.">
        <title>The RPC31 gene of Saccharomyces cerevisiae encodes a subunit of RNA polymerase C (III) with an acidic tail.</title>
        <authorList>
            <person name="Mosrin C."/>
            <person name="Riva M."/>
            <person name="Beltrame M."/>
            <person name="Cassar E."/>
            <person name="Sentenac A."/>
            <person name="Thuriaux P."/>
        </authorList>
    </citation>
    <scope>NUCLEOTIDE SEQUENCE [GENOMIC DNA]</scope>
    <scope>PARTIAL PROTEIN SEQUENCE</scope>
    <source>
        <strain>S288c / GRF88</strain>
    </source>
</reference>
<reference key="2">
    <citation type="journal article" date="1988" name="Mol. Cell. Biol.">
        <title>The Saccharomyces cerevisiae ACP2 gene encodes an essential HMG1-like protein.</title>
        <authorList>
            <person name="Haggren W."/>
            <person name="Kolodrubetz D."/>
        </authorList>
    </citation>
    <scope>NUCLEOTIDE SEQUENCE [GENOMIC DNA]</scope>
    <source>
        <strain>DBY1091 / DKY1</strain>
    </source>
</reference>
<reference key="3">
    <citation type="journal article" date="1996" name="Yeast">
        <title>The sequence of 36.8 kb from the left arm of chromosome XIV reveals 24 complete open reading frames: 18 correspond to new genes, one of which encodes a protein similar to the human myotonic dystrophy kinase.</title>
        <authorList>
            <person name="Nasr F."/>
            <person name="Becam A.-M."/>
            <person name="Herbert C.J."/>
        </authorList>
    </citation>
    <scope>NUCLEOTIDE SEQUENCE [GENOMIC DNA]</scope>
    <source>
        <strain>ATCC 96604 / S288c / FY1679</strain>
    </source>
</reference>
<reference key="4">
    <citation type="journal article" date="1997" name="Nature">
        <title>The nucleotide sequence of Saccharomyces cerevisiae chromosome XIV and its evolutionary implications.</title>
        <authorList>
            <person name="Philippsen P."/>
            <person name="Kleine K."/>
            <person name="Poehlmann R."/>
            <person name="Duesterhoeft A."/>
            <person name="Hamberg K."/>
            <person name="Hegemann J.H."/>
            <person name="Obermaier B."/>
            <person name="Urrestarazu L.A."/>
            <person name="Aert R."/>
            <person name="Albermann K."/>
            <person name="Altmann R."/>
            <person name="Andre B."/>
            <person name="Baladron V."/>
            <person name="Ballesta J.P.G."/>
            <person name="Becam A.-M."/>
            <person name="Beinhauer J.D."/>
            <person name="Boskovic J."/>
            <person name="Buitrago M.J."/>
            <person name="Bussereau F."/>
            <person name="Coster F."/>
            <person name="Crouzet M."/>
            <person name="D'Angelo M."/>
            <person name="Dal Pero F."/>
            <person name="De Antoni A."/>
            <person name="del Rey F."/>
            <person name="Doignon F."/>
            <person name="Domdey H."/>
            <person name="Dubois E."/>
            <person name="Fiedler T.A."/>
            <person name="Fleig U."/>
            <person name="Floeth M."/>
            <person name="Fritz C."/>
            <person name="Gaillardin C."/>
            <person name="Garcia-Cantalejo J.M."/>
            <person name="Glansdorff N."/>
            <person name="Goffeau A."/>
            <person name="Gueldener U."/>
            <person name="Herbert C.J."/>
            <person name="Heumann K."/>
            <person name="Heuss-Neitzel D."/>
            <person name="Hilbert H."/>
            <person name="Hinni K."/>
            <person name="Iraqui Houssaini I."/>
            <person name="Jacquet M."/>
            <person name="Jimenez A."/>
            <person name="Jonniaux J.-L."/>
            <person name="Karpfinger-Hartl L."/>
            <person name="Lanfranchi G."/>
            <person name="Lepingle A."/>
            <person name="Levesque H."/>
            <person name="Lyck R."/>
            <person name="Maftahi M."/>
            <person name="Mallet L."/>
            <person name="Maurer C.T.C."/>
            <person name="Messenguy F."/>
            <person name="Mewes H.-W."/>
            <person name="Moestl D."/>
            <person name="Nasr F."/>
            <person name="Nicaud J.-M."/>
            <person name="Niedenthal R.K."/>
            <person name="Pandolfo D."/>
            <person name="Pierard A."/>
            <person name="Piravandi E."/>
            <person name="Planta R.J."/>
            <person name="Pohl T.M."/>
            <person name="Purnelle B."/>
            <person name="Rebischung C."/>
            <person name="Remacha M.A."/>
            <person name="Revuelta J.L."/>
            <person name="Rinke M."/>
            <person name="Saiz J.E."/>
            <person name="Sartorello F."/>
            <person name="Scherens B."/>
            <person name="Sen-Gupta M."/>
            <person name="Soler-Mira A."/>
            <person name="Urbanus J.H.M."/>
            <person name="Valle G."/>
            <person name="Van Dyck L."/>
            <person name="Verhasselt P."/>
            <person name="Vierendeels F."/>
            <person name="Vissers S."/>
            <person name="Voet M."/>
            <person name="Volckaert G."/>
            <person name="Wach A."/>
            <person name="Wambutt R."/>
            <person name="Wedler H."/>
            <person name="Zollner A."/>
            <person name="Hani J."/>
        </authorList>
    </citation>
    <scope>NUCLEOTIDE SEQUENCE [LARGE SCALE GENOMIC DNA]</scope>
    <source>
        <strain>ATCC 204508 / S288c</strain>
    </source>
</reference>
<reference key="5">
    <citation type="journal article" date="2014" name="G3 (Bethesda)">
        <title>The reference genome sequence of Saccharomyces cerevisiae: Then and now.</title>
        <authorList>
            <person name="Engel S.R."/>
            <person name="Dietrich F.S."/>
            <person name="Fisk D.G."/>
            <person name="Binkley G."/>
            <person name="Balakrishnan R."/>
            <person name="Costanzo M.C."/>
            <person name="Dwight S.S."/>
            <person name="Hitz B.C."/>
            <person name="Karra K."/>
            <person name="Nash R.S."/>
            <person name="Weng S."/>
            <person name="Wong E.D."/>
            <person name="Lloyd P."/>
            <person name="Skrzypek M.S."/>
            <person name="Miyasato S.R."/>
            <person name="Simison M."/>
            <person name="Cherry J.M."/>
        </authorList>
    </citation>
    <scope>GENOME REANNOTATION</scope>
    <source>
        <strain>ATCC 204508 / S288c</strain>
    </source>
</reference>
<reference key="6">
    <citation type="journal article" date="1998" name="Cold Spring Harb. Symp. Quant. Biol.">
        <title>The yeast RNA polymerase III transcription machinery: a paradigm for eukaryotic gene activation.</title>
        <authorList>
            <person name="Chedin S."/>
            <person name="Ferri M.L."/>
            <person name="Peyroche G."/>
            <person name="Andrau J.-C."/>
            <person name="Jourdain S."/>
            <person name="Lefebvre O."/>
            <person name="Werner M."/>
            <person name="Carles C."/>
            <person name="Sentenac A."/>
        </authorList>
    </citation>
    <scope>REVIEW ON THE RNA POL III COMPLEX</scope>
</reference>
<reference key="7">
    <citation type="journal article" date="2007" name="J. Proteome Res.">
        <title>Large-scale phosphorylation analysis of alpha-factor-arrested Saccharomyces cerevisiae.</title>
        <authorList>
            <person name="Li X."/>
            <person name="Gerber S.A."/>
            <person name="Rudner A.D."/>
            <person name="Beausoleil S.A."/>
            <person name="Haas W."/>
            <person name="Villen J."/>
            <person name="Elias J.E."/>
            <person name="Gygi S.P."/>
        </authorList>
    </citation>
    <scope>PHOSPHORYLATION [LARGE SCALE ANALYSIS] AT SER-189</scope>
    <scope>IDENTIFICATION BY MASS SPECTROMETRY [LARGE SCALE ANALYSIS]</scope>
    <source>
        <strain>ADR376</strain>
    </source>
</reference>
<reference key="8">
    <citation type="journal article" date="2008" name="Mol. Cell. Proteomics">
        <title>A multidimensional chromatography technology for in-depth phosphoproteome analysis.</title>
        <authorList>
            <person name="Albuquerque C.P."/>
            <person name="Smolka M.B."/>
            <person name="Payne S.H."/>
            <person name="Bafna V."/>
            <person name="Eng J."/>
            <person name="Zhou H."/>
        </authorList>
    </citation>
    <scope>IDENTIFICATION BY MASS SPECTROMETRY [LARGE SCALE ANALYSIS]</scope>
</reference>
<reference key="9">
    <citation type="journal article" date="2009" name="Science">
        <title>Global analysis of Cdk1 substrate phosphorylation sites provides insights into evolution.</title>
        <authorList>
            <person name="Holt L.J."/>
            <person name="Tuch B.B."/>
            <person name="Villen J."/>
            <person name="Johnson A.D."/>
            <person name="Gygi S.P."/>
            <person name="Morgan D.O."/>
        </authorList>
    </citation>
    <scope>IDENTIFICATION BY MASS SPECTROMETRY [LARGE SCALE ANALYSIS]</scope>
</reference>
<evidence type="ECO:0000256" key="1">
    <source>
        <dbReference type="SAM" id="MobiDB-lite"/>
    </source>
</evidence>
<evidence type="ECO:0000305" key="2"/>
<evidence type="ECO:0007744" key="3">
    <source>
    </source>
</evidence>
<evidence type="ECO:0007829" key="4">
    <source>
        <dbReference type="PDB" id="6EU1"/>
    </source>
</evidence>
<evidence type="ECO:0007829" key="5">
    <source>
        <dbReference type="PDB" id="6TUT"/>
    </source>
</evidence>
<evidence type="ECO:0007829" key="6">
    <source>
        <dbReference type="PDB" id="7Z31"/>
    </source>
</evidence>
<evidence type="ECO:0007829" key="7">
    <source>
        <dbReference type="PDB" id="8BWS"/>
    </source>
</evidence>
<protein>
    <recommendedName>
        <fullName>DNA-directed RNA polymerase III subunit RPC7</fullName>
        <shortName>RNA polymerase III subunit C7</shortName>
    </recommendedName>
    <alternativeName>
        <fullName>DNA-directed RNA polymerase III 31 kDa polypeptide</fullName>
        <shortName>C31</shortName>
    </alternativeName>
</protein>
<name>RPC7_YEAST</name>
<keyword id="KW-0002">3D-structure</keyword>
<keyword id="KW-0903">Direct protein sequencing</keyword>
<keyword id="KW-0238">DNA-binding</keyword>
<keyword id="KW-0240">DNA-directed RNA polymerase</keyword>
<keyword id="KW-0548">Nucleotidyltransferase</keyword>
<keyword id="KW-0539">Nucleus</keyword>
<keyword id="KW-0597">Phosphoprotein</keyword>
<keyword id="KW-1185">Reference proteome</keyword>
<keyword id="KW-0804">Transcription</keyword>
<keyword id="KW-0808">Transferase</keyword>
<gene>
    <name type="primary">RPC31</name>
    <name type="synonym">ACP2</name>
    <name type="synonym">RPC8</name>
    <name type="ordered locus">YNL151C</name>
    <name type="ORF">N1769</name>
</gene>